<sequence>MKHLPKHLRPRWRYFAVGIETWPDADLGRRGFQRALWYAAGNLLGDAGSADADLTLLSFSHDGGEGEAIVRARHGHVDDARATIACVSEVDDEPVGVRVRGISGTVRACEERYMGRAGGSSTQRDVAFEGAERSAVVREDAYDVWTGSAYVGAAAFDTE</sequence>
<protein>
    <recommendedName>
        <fullName evidence="1">Ribonuclease P protein component 2</fullName>
        <shortName evidence="1">RNase P component 2</shortName>
        <ecNumber evidence="1">3.1.26.5</ecNumber>
    </recommendedName>
    <alternativeName>
        <fullName evidence="1">Pop5</fullName>
    </alternativeName>
</protein>
<keyword id="KW-0963">Cytoplasm</keyword>
<keyword id="KW-0255">Endonuclease</keyword>
<keyword id="KW-0378">Hydrolase</keyword>
<keyword id="KW-0540">Nuclease</keyword>
<keyword id="KW-1185">Reference proteome</keyword>
<keyword id="KW-0819">tRNA processing</keyword>
<organism>
    <name type="scientific">Halorubrum lacusprofundi (strain ATCC 49239 / DSM 5036 / JCM 8891 / ACAM 34)</name>
    <dbReference type="NCBI Taxonomy" id="416348"/>
    <lineage>
        <taxon>Archaea</taxon>
        <taxon>Methanobacteriati</taxon>
        <taxon>Methanobacteriota</taxon>
        <taxon>Stenosarchaea group</taxon>
        <taxon>Halobacteria</taxon>
        <taxon>Halobacteriales</taxon>
        <taxon>Haloferacaceae</taxon>
        <taxon>Halorubrum</taxon>
    </lineage>
</organism>
<name>RNP2_HALLT</name>
<reference key="1">
    <citation type="journal article" date="2016" name="Stand. Genomic Sci.">
        <title>Complete genome sequence of the Antarctic Halorubrum lacusprofundi type strain ACAM 34.</title>
        <authorList>
            <person name="Anderson I.J."/>
            <person name="DasSarma P."/>
            <person name="Lucas S."/>
            <person name="Copeland A."/>
            <person name="Lapidus A."/>
            <person name="Del Rio T.G."/>
            <person name="Tice H."/>
            <person name="Dalin E."/>
            <person name="Bruce D.C."/>
            <person name="Goodwin L."/>
            <person name="Pitluck S."/>
            <person name="Sims D."/>
            <person name="Brettin T.S."/>
            <person name="Detter J.C."/>
            <person name="Han C.S."/>
            <person name="Larimer F."/>
            <person name="Hauser L."/>
            <person name="Land M."/>
            <person name="Ivanova N."/>
            <person name="Richardson P."/>
            <person name="Cavicchioli R."/>
            <person name="DasSarma S."/>
            <person name="Woese C.R."/>
            <person name="Kyrpides N.C."/>
        </authorList>
    </citation>
    <scope>NUCLEOTIDE SEQUENCE [LARGE SCALE GENOMIC DNA]</scope>
    <source>
        <strain>ATCC 49239 / DSM 5036 / JCM 8891 / ACAM 34</strain>
    </source>
</reference>
<comment type="function">
    <text evidence="1">Part of ribonuclease P, a protein complex that generates mature tRNA molecules by cleaving their 5'-ends.</text>
</comment>
<comment type="catalytic activity">
    <reaction evidence="1">
        <text>Endonucleolytic cleavage of RNA, removing 5'-extranucleotides from tRNA precursor.</text>
        <dbReference type="EC" id="3.1.26.5"/>
    </reaction>
</comment>
<comment type="subunit">
    <text evidence="1">Consists of a catalytic RNA component and at least 4-5 protein subunits.</text>
</comment>
<comment type="subcellular location">
    <subcellularLocation>
        <location evidence="1">Cytoplasm</location>
    </subcellularLocation>
</comment>
<comment type="similarity">
    <text evidence="1">Belongs to the eukaryotic/archaeal RNase P protein component 2 family.</text>
</comment>
<gene>
    <name evidence="1" type="primary">rnp2</name>
    <name type="ordered locus">Hlac_0962</name>
</gene>
<evidence type="ECO:0000255" key="1">
    <source>
        <dbReference type="HAMAP-Rule" id="MF_00755"/>
    </source>
</evidence>
<dbReference type="EC" id="3.1.26.5" evidence="1"/>
<dbReference type="EMBL" id="CP001365">
    <property type="protein sequence ID" value="ACM56560.1"/>
    <property type="molecule type" value="Genomic_DNA"/>
</dbReference>
<dbReference type="RefSeq" id="WP_015909708.1">
    <property type="nucleotide sequence ID" value="NC_012029.1"/>
</dbReference>
<dbReference type="SMR" id="B9LMH2"/>
<dbReference type="GeneID" id="7401856"/>
<dbReference type="KEGG" id="hla:Hlac_0962"/>
<dbReference type="eggNOG" id="arCOG01365">
    <property type="taxonomic scope" value="Archaea"/>
</dbReference>
<dbReference type="HOGENOM" id="CLU_137733_0_0_2"/>
<dbReference type="Proteomes" id="UP000000740">
    <property type="component" value="Chromosome 1"/>
</dbReference>
<dbReference type="GO" id="GO:0005737">
    <property type="term" value="C:cytoplasm"/>
    <property type="evidence" value="ECO:0007669"/>
    <property type="project" value="UniProtKB-SubCell"/>
</dbReference>
<dbReference type="GO" id="GO:0030677">
    <property type="term" value="C:ribonuclease P complex"/>
    <property type="evidence" value="ECO:0007669"/>
    <property type="project" value="UniProtKB-UniRule"/>
</dbReference>
<dbReference type="GO" id="GO:0004526">
    <property type="term" value="F:ribonuclease P activity"/>
    <property type="evidence" value="ECO:0007669"/>
    <property type="project" value="UniProtKB-UniRule"/>
</dbReference>
<dbReference type="GO" id="GO:0001682">
    <property type="term" value="P:tRNA 5'-leader removal"/>
    <property type="evidence" value="ECO:0007669"/>
    <property type="project" value="UniProtKB-UniRule"/>
</dbReference>
<dbReference type="Gene3D" id="3.30.70.3250">
    <property type="entry name" value="Ribonuclease P, Pop5 subunit"/>
    <property type="match status" value="1"/>
</dbReference>
<dbReference type="HAMAP" id="MF_00755">
    <property type="entry name" value="RNase_P_2"/>
    <property type="match status" value="1"/>
</dbReference>
<dbReference type="InterPro" id="IPR002759">
    <property type="entry name" value="Pop5/Rpp14/Rnp2-like"/>
</dbReference>
<dbReference type="InterPro" id="IPR038085">
    <property type="entry name" value="Rnp2-like_sf"/>
</dbReference>
<dbReference type="Pfam" id="PF01900">
    <property type="entry name" value="RNase_P_Rpp14"/>
    <property type="match status" value="1"/>
</dbReference>
<dbReference type="SUPFAM" id="SSF160350">
    <property type="entry name" value="Rnp2-like"/>
    <property type="match status" value="1"/>
</dbReference>
<accession>B9LMH2</accession>
<proteinExistence type="inferred from homology"/>
<feature type="chain" id="PRO_1000148364" description="Ribonuclease P protein component 2">
    <location>
        <begin position="1"/>
        <end position="159"/>
    </location>
</feature>